<reference key="1">
    <citation type="journal article" date="2006" name="Proc. Natl. Acad. Sci. U.S.A.">
        <title>Molecular genetic anatomy of inter- and intraserotype variation in the human bacterial pathogen group A Streptococcus.</title>
        <authorList>
            <person name="Beres S.B."/>
            <person name="Richter E.W."/>
            <person name="Nagiec M.J."/>
            <person name="Sumby P."/>
            <person name="Porcella S.F."/>
            <person name="DeLeo F.R."/>
            <person name="Musser J.M."/>
        </authorList>
    </citation>
    <scope>NUCLEOTIDE SEQUENCE [LARGE SCALE GENOMIC DNA]</scope>
    <source>
        <strain>MGAS10750</strain>
    </source>
</reference>
<sequence>MGRSLKKGPFVDEHLMKKVEAQANDEKKKVIKTWSRRSTIFPSFIGYTIAVYDGRKHVPVYIQEDMVGHKLGEFAPTRTYKGHAADDKKTRR</sequence>
<organism>
    <name type="scientific">Streptococcus pyogenes serotype M4 (strain MGAS10750)</name>
    <dbReference type="NCBI Taxonomy" id="370554"/>
    <lineage>
        <taxon>Bacteria</taxon>
        <taxon>Bacillati</taxon>
        <taxon>Bacillota</taxon>
        <taxon>Bacilli</taxon>
        <taxon>Lactobacillales</taxon>
        <taxon>Streptococcaceae</taxon>
        <taxon>Streptococcus</taxon>
    </lineage>
</organism>
<feature type="chain" id="PRO_0000265446" description="Small ribosomal subunit protein uS19">
    <location>
        <begin position="1"/>
        <end position="92"/>
    </location>
</feature>
<gene>
    <name evidence="1" type="primary">rpsS</name>
    <name type="ordered locus">MGAS10750_Spy0051</name>
</gene>
<name>RS19_STRPF</name>
<comment type="function">
    <text evidence="1">Protein S19 forms a complex with S13 that binds strongly to the 16S ribosomal RNA.</text>
</comment>
<comment type="similarity">
    <text evidence="1">Belongs to the universal ribosomal protein uS19 family.</text>
</comment>
<comment type="sequence caution" evidence="2">
    <conflict type="erroneous initiation">
        <sequence resource="EMBL-CDS" id="ABF37001"/>
    </conflict>
</comment>
<accession>Q1J910</accession>
<dbReference type="EMBL" id="CP000262">
    <property type="protein sequence ID" value="ABF37001.1"/>
    <property type="status" value="ALT_INIT"/>
    <property type="molecule type" value="Genomic_DNA"/>
</dbReference>
<dbReference type="SMR" id="Q1J910"/>
<dbReference type="KEGG" id="spi:MGAS10750_Spy0051"/>
<dbReference type="HOGENOM" id="CLU_144911_0_0_9"/>
<dbReference type="Proteomes" id="UP000002434">
    <property type="component" value="Chromosome"/>
</dbReference>
<dbReference type="GO" id="GO:0005737">
    <property type="term" value="C:cytoplasm"/>
    <property type="evidence" value="ECO:0007669"/>
    <property type="project" value="UniProtKB-ARBA"/>
</dbReference>
<dbReference type="GO" id="GO:0015935">
    <property type="term" value="C:small ribosomal subunit"/>
    <property type="evidence" value="ECO:0007669"/>
    <property type="project" value="InterPro"/>
</dbReference>
<dbReference type="GO" id="GO:0019843">
    <property type="term" value="F:rRNA binding"/>
    <property type="evidence" value="ECO:0007669"/>
    <property type="project" value="UniProtKB-UniRule"/>
</dbReference>
<dbReference type="GO" id="GO:0003735">
    <property type="term" value="F:structural constituent of ribosome"/>
    <property type="evidence" value="ECO:0007669"/>
    <property type="project" value="InterPro"/>
</dbReference>
<dbReference type="GO" id="GO:0000028">
    <property type="term" value="P:ribosomal small subunit assembly"/>
    <property type="evidence" value="ECO:0007669"/>
    <property type="project" value="TreeGrafter"/>
</dbReference>
<dbReference type="GO" id="GO:0006412">
    <property type="term" value="P:translation"/>
    <property type="evidence" value="ECO:0007669"/>
    <property type="project" value="UniProtKB-UniRule"/>
</dbReference>
<dbReference type="FunFam" id="3.30.860.10:FF:000001">
    <property type="entry name" value="30S ribosomal protein S19"/>
    <property type="match status" value="1"/>
</dbReference>
<dbReference type="Gene3D" id="3.30.860.10">
    <property type="entry name" value="30s Ribosomal Protein S19, Chain A"/>
    <property type="match status" value="1"/>
</dbReference>
<dbReference type="HAMAP" id="MF_00531">
    <property type="entry name" value="Ribosomal_uS19"/>
    <property type="match status" value="1"/>
</dbReference>
<dbReference type="InterPro" id="IPR002222">
    <property type="entry name" value="Ribosomal_uS19"/>
</dbReference>
<dbReference type="InterPro" id="IPR005732">
    <property type="entry name" value="Ribosomal_uS19_bac-type"/>
</dbReference>
<dbReference type="InterPro" id="IPR020934">
    <property type="entry name" value="Ribosomal_uS19_CS"/>
</dbReference>
<dbReference type="InterPro" id="IPR023575">
    <property type="entry name" value="Ribosomal_uS19_SF"/>
</dbReference>
<dbReference type="NCBIfam" id="TIGR01050">
    <property type="entry name" value="rpsS_bact"/>
    <property type="match status" value="1"/>
</dbReference>
<dbReference type="PANTHER" id="PTHR11880">
    <property type="entry name" value="RIBOSOMAL PROTEIN S19P FAMILY MEMBER"/>
    <property type="match status" value="1"/>
</dbReference>
<dbReference type="PANTHER" id="PTHR11880:SF8">
    <property type="entry name" value="SMALL RIBOSOMAL SUBUNIT PROTEIN US19M"/>
    <property type="match status" value="1"/>
</dbReference>
<dbReference type="Pfam" id="PF00203">
    <property type="entry name" value="Ribosomal_S19"/>
    <property type="match status" value="1"/>
</dbReference>
<dbReference type="PIRSF" id="PIRSF002144">
    <property type="entry name" value="Ribosomal_S19"/>
    <property type="match status" value="1"/>
</dbReference>
<dbReference type="PRINTS" id="PR00975">
    <property type="entry name" value="RIBOSOMALS19"/>
</dbReference>
<dbReference type="SUPFAM" id="SSF54570">
    <property type="entry name" value="Ribosomal protein S19"/>
    <property type="match status" value="1"/>
</dbReference>
<dbReference type="PROSITE" id="PS00323">
    <property type="entry name" value="RIBOSOMAL_S19"/>
    <property type="match status" value="1"/>
</dbReference>
<keyword id="KW-0687">Ribonucleoprotein</keyword>
<keyword id="KW-0689">Ribosomal protein</keyword>
<keyword id="KW-0694">RNA-binding</keyword>
<keyword id="KW-0699">rRNA-binding</keyword>
<proteinExistence type="inferred from homology"/>
<evidence type="ECO:0000255" key="1">
    <source>
        <dbReference type="HAMAP-Rule" id="MF_00531"/>
    </source>
</evidence>
<evidence type="ECO:0000305" key="2"/>
<protein>
    <recommendedName>
        <fullName evidence="1">Small ribosomal subunit protein uS19</fullName>
    </recommendedName>
    <alternativeName>
        <fullName evidence="2">30S ribosomal protein S19</fullName>
    </alternativeName>
</protein>